<dbReference type="EMBL" id="M14119">
    <property type="protein sequence ID" value="AAA46934.1"/>
    <property type="molecule type" value="Genomic_DNA"/>
</dbReference>
<dbReference type="PIR" id="A03648">
    <property type="entry name" value="P2WL11"/>
</dbReference>
<dbReference type="MINT" id="P04013"/>
<dbReference type="Proteomes" id="UP000008222">
    <property type="component" value="Genome"/>
</dbReference>
<dbReference type="GO" id="GO:0043657">
    <property type="term" value="C:host cell"/>
    <property type="evidence" value="ECO:0007669"/>
    <property type="project" value="GOC"/>
</dbReference>
<dbReference type="GO" id="GO:0044174">
    <property type="term" value="C:host cell endosome"/>
    <property type="evidence" value="ECO:0007669"/>
    <property type="project" value="UniProtKB-KW"/>
</dbReference>
<dbReference type="GO" id="GO:0044177">
    <property type="term" value="C:host cell Golgi apparatus"/>
    <property type="evidence" value="ECO:0007669"/>
    <property type="project" value="UniProtKB-SubCell"/>
</dbReference>
<dbReference type="GO" id="GO:0042025">
    <property type="term" value="C:host cell nucleus"/>
    <property type="evidence" value="ECO:0007669"/>
    <property type="project" value="UniProtKB-SubCell"/>
</dbReference>
<dbReference type="GO" id="GO:0019028">
    <property type="term" value="C:viral capsid"/>
    <property type="evidence" value="ECO:0007669"/>
    <property type="project" value="UniProtKB-UniRule"/>
</dbReference>
<dbReference type="GO" id="GO:0003677">
    <property type="term" value="F:DNA binding"/>
    <property type="evidence" value="ECO:0007669"/>
    <property type="project" value="UniProtKB-UniRule"/>
</dbReference>
<dbReference type="GO" id="GO:0005198">
    <property type="term" value="F:structural molecule activity"/>
    <property type="evidence" value="ECO:0007669"/>
    <property type="project" value="UniProtKB-UniRule"/>
</dbReference>
<dbReference type="GO" id="GO:0075521">
    <property type="term" value="P:microtubule-dependent intracellular transport of viral material towards nucleus"/>
    <property type="evidence" value="ECO:0007669"/>
    <property type="project" value="UniProtKB-UniRule"/>
</dbReference>
<dbReference type="GO" id="GO:0046718">
    <property type="term" value="P:symbiont entry into host cell"/>
    <property type="evidence" value="ECO:0007669"/>
    <property type="project" value="UniProtKB-KW"/>
</dbReference>
<dbReference type="GO" id="GO:0075732">
    <property type="term" value="P:viral penetration into host nucleus"/>
    <property type="evidence" value="ECO:0007669"/>
    <property type="project" value="UniProtKB-KW"/>
</dbReference>
<dbReference type="HAMAP" id="MF_04003">
    <property type="entry name" value="PPV_L2"/>
    <property type="match status" value="1"/>
</dbReference>
<dbReference type="InterPro" id="IPR000784">
    <property type="entry name" value="Late_L2"/>
</dbReference>
<dbReference type="Pfam" id="PF00513">
    <property type="entry name" value="Late_protein_L2"/>
    <property type="match status" value="1"/>
</dbReference>
<organism>
    <name type="scientific">Human papillomavirus 11</name>
    <dbReference type="NCBI Taxonomy" id="10580"/>
    <lineage>
        <taxon>Viruses</taxon>
        <taxon>Monodnaviria</taxon>
        <taxon>Shotokuvirae</taxon>
        <taxon>Cossaviricota</taxon>
        <taxon>Papovaviricetes</taxon>
        <taxon>Zurhausenvirales</taxon>
        <taxon>Papillomaviridae</taxon>
        <taxon>Firstpapillomavirinae</taxon>
        <taxon>Alphapapillomavirus</taxon>
        <taxon>Alphapapillomavirus 10</taxon>
    </lineage>
</organism>
<name>VL2_HPV11</name>
<gene>
    <name evidence="1" type="primary">L2</name>
</gene>
<feature type="chain" id="PRO_0000133578" description="Minor capsid protein L2">
    <location>
        <begin position="1"/>
        <end position="455"/>
    </location>
</feature>
<feature type="short sequence motif" description="Nuclear localization signal" evidence="1">
    <location>
        <begin position="1"/>
        <end position="11"/>
    </location>
</feature>
<feature type="short sequence motif" description="Nuclear localization signal" evidence="1">
    <location>
        <begin position="438"/>
        <end position="446"/>
    </location>
</feature>
<feature type="disulfide bond" evidence="1">
    <location>
        <begin position="20"/>
        <end position="26"/>
    </location>
</feature>
<reference key="1">
    <citation type="journal article" date="1986" name="Virology">
        <title>The nucleotide sequence and genome organization of human papilloma virus type 11.</title>
        <authorList>
            <person name="Dartmann K."/>
            <person name="Schwarz E."/>
            <person name="Gissmann L."/>
            <person name="zur Hausen H."/>
        </authorList>
    </citation>
    <scope>NUCLEOTIDE SEQUENCE [GENOMIC DNA]</scope>
</reference>
<reference key="2">
    <citation type="journal article" date="2006" name="J. Virol.">
        <title>The l2 minor capsid protein of low-risk human papillomavirus type 11 interacts with host nuclear import receptors and viral DNA.</title>
        <authorList>
            <person name="Bordeaux J."/>
            <person name="Forte S."/>
            <person name="Harding E."/>
            <person name="Darshan M.S."/>
            <person name="Klucevsek K."/>
            <person name="Moroianu J."/>
        </authorList>
    </citation>
    <scope>FUNCTION</scope>
    <scope>INTERACTION WITH IMPORTINS KPNB1; KPNB2 AND KPNB3</scope>
</reference>
<keyword id="KW-0167">Capsid protein</keyword>
<keyword id="KW-1176">Cytoplasmic inwards viral transport</keyword>
<keyword id="KW-1015">Disulfide bond</keyword>
<keyword id="KW-0238">DNA-binding</keyword>
<keyword id="KW-1039">Host endosome</keyword>
<keyword id="KW-1040">Host Golgi apparatus</keyword>
<keyword id="KW-1048">Host nucleus</keyword>
<keyword id="KW-0945">Host-virus interaction</keyword>
<keyword id="KW-0426">Late protein</keyword>
<keyword id="KW-1177">Microtubular inwards viral transport</keyword>
<keyword id="KW-0597">Phosphoprotein</keyword>
<keyword id="KW-1185">Reference proteome</keyword>
<keyword id="KW-1163">Viral penetration into host nucleus</keyword>
<keyword id="KW-0946">Virion</keyword>
<keyword id="KW-1160">Virus entry into host cell</keyword>
<protein>
    <recommendedName>
        <fullName evidence="1">Minor capsid protein L2</fullName>
    </recommendedName>
</protein>
<organismHost>
    <name type="scientific">Homo sapiens</name>
    <name type="common">Human</name>
    <dbReference type="NCBI Taxonomy" id="9606"/>
</organismHost>
<proteinExistence type="evidence at protein level"/>
<sequence length="455" mass="49096">MKPRARRRKRASATQLYQTCKATGTCPPDVIPKVEHTTIADQILKWGSLGVFFGGLGIGTGAGSGGRAGYIPLGSSPKPAITGGPAARPPVLVEPVAPSDPSIVSLIEESAIINAGAPEVVPPTQGGFTITSSESTTPAILDVSVTNHTTTSVFQNPLFTEPSVIQPQPPVEASGHILISAPTITSQHVEDIPLDTFVVSSSDSGPTSSTPLPRAFPRPRVGLYSRALQQVQVTDPAFLSTPQRLVTYDNPVYEGEDVSLQFTHESIHNAPDEAFMDIIRLHRPAITSRRGLVRFSRIGQRGSMYTRSGQHIGARIHYFQDISPVTQAAEEIELHPLVAAENDTFDIYAEPFDPIPDPVQHSVTQSYLTSTPNTLSQSWGNTTVPLSIPSDWFVQSGPDITFPTASMGTPFSPVTPALPTGPVFITGSDFYLHPTWYFARRRRKRIPLFFTDVAA</sequence>
<evidence type="ECO:0000255" key="1">
    <source>
        <dbReference type="HAMAP-Rule" id="MF_04003"/>
    </source>
</evidence>
<accession>P04013</accession>
<comment type="function">
    <text evidence="1">Minor protein of the capsid that localizes along the inner surface of the virion, within the central cavities beneath the L1 pentamers. Plays a role in capsid stabilization through interaction with the major capsid protein L1. Once the virion enters the host cell, L2 escorts the genomic DNA into the nucleus by promoting escape from the endosomal compartments and traffic through the host Golgi network. Mechanistically, the C-terminus of L2 possesses a cell-penetrating peptide that protudes from the host endosome, interacts with host cytoplasmic retromer cargo and thereby mediates the capsid delivery to the host trans-Golgi network. Plays a role through its interaction with host dynein in the intracellular microtubule-dependent transport of viral capsid toward the nucleus. Mediates the viral genome import into the nucleus through binding to host importins. Once within the nucleus, L2 localizes viral genomes to host PML bodies in order to activate early gene expression for establishment of infection. Later on, promotes late gene expression by interacting with the viral E2 protein and by inhibiting its transcriptional activation functions. During virion assembly, encapsidates the genome by direct interaction with the viral DNA.</text>
</comment>
<comment type="subunit">
    <text evidence="1">Interacts with major capsid protein L1. Interacts with E2; this interaction inhibits E2 transcriptional activity but not the DNA replication function E2. Interacts with host GADD45GIP1. Interacts with host HSPA8; this interaction is required for L2 nuclear translocation. Interacts with host importins KPNB2 and KPNB3. Forms a complex with importin alpha2-beta1 heterodimers via interaction with the importin alpha2 adapter. Interacts with host DYNLT1; this interaction is essential for virus intracellular transport during entry. Interacts (via C-terminus) with host retromer subunits VPS35 and VPS29.</text>
</comment>
<comment type="subcellular location">
    <subcellularLocation>
        <location evidence="1">Virion</location>
    </subcellularLocation>
    <subcellularLocation>
        <location evidence="1">Host nucleus</location>
    </subcellularLocation>
    <subcellularLocation>
        <location evidence="1">Host early endosome</location>
    </subcellularLocation>
    <subcellularLocation>
        <location evidence="1">Host Golgi apparatus</location>
    </subcellularLocation>
</comment>
<comment type="PTM">
    <text evidence="1">Highly phosphorylated.</text>
</comment>
<comment type="similarity">
    <text evidence="1">Belongs to the papillomaviridae L2 protein family.</text>
</comment>